<comment type="function">
    <text evidence="1 3">Probable component of a transcriptional corepressor complex that acts downstream of MAX2 to negatively regulate karrikins/strigolactone responses (By similarity). Involved in the (-)-germacrene D signaling pathway influencing plant fitness and occurring in the stigma in a KAI2IA-dependent manner (PubMed:38513014).</text>
</comment>
<comment type="induction">
    <text evidence="3">Targeted to degradation in stigma upon (-)-germacrene D perception by KAI2IA, probably through the formation of an E3 SCF ubiquitin ligase complex (ASK-cullin-F-box) containing MAX2A or MAX2B and KAI2IA recognizing SMAX1A.</text>
</comment>
<comment type="similarity">
    <text evidence="5">Belongs to the ClpA/ClpB family.</text>
</comment>
<evidence type="ECO:0000250" key="1">
    <source>
        <dbReference type="UniProtKB" id="Q9FHH2"/>
    </source>
</evidence>
<evidence type="ECO:0000256" key="2">
    <source>
        <dbReference type="SAM" id="MobiDB-lite"/>
    </source>
</evidence>
<evidence type="ECO:0000269" key="3">
    <source>
    </source>
</evidence>
<evidence type="ECO:0000303" key="4">
    <source>
    </source>
</evidence>
<evidence type="ECO:0000305" key="5"/>
<dbReference type="EMBL" id="OR700016">
    <property type="protein sequence ID" value="WVR18526.1"/>
    <property type="molecule type" value="mRNA"/>
</dbReference>
<dbReference type="GO" id="GO:0005524">
    <property type="term" value="F:ATP binding"/>
    <property type="evidence" value="ECO:0007669"/>
    <property type="project" value="InterPro"/>
</dbReference>
<dbReference type="GO" id="GO:0016887">
    <property type="term" value="F:ATP hydrolysis activity"/>
    <property type="evidence" value="ECO:0007669"/>
    <property type="project" value="InterPro"/>
</dbReference>
<dbReference type="Gene3D" id="3.40.50.300">
    <property type="entry name" value="P-loop containing nucleotide triphosphate hydrolases"/>
    <property type="match status" value="1"/>
</dbReference>
<dbReference type="InterPro" id="IPR003959">
    <property type="entry name" value="ATPase_AAA_core"/>
</dbReference>
<dbReference type="InterPro" id="IPR027417">
    <property type="entry name" value="P-loop_NTPase"/>
</dbReference>
<dbReference type="InterPro" id="IPR051650">
    <property type="entry name" value="SL_signaling_regulator"/>
</dbReference>
<dbReference type="PANTHER" id="PTHR43572">
    <property type="entry name" value="CHAPERONE PROTEIN CLPD, CHLOROPLASTIC"/>
    <property type="match status" value="1"/>
</dbReference>
<dbReference type="PANTHER" id="PTHR43572:SF13">
    <property type="entry name" value="PROTEIN SUPPRESSOR OF MAX2 1"/>
    <property type="match status" value="1"/>
</dbReference>
<dbReference type="Pfam" id="PF07724">
    <property type="entry name" value="AAA_2"/>
    <property type="match status" value="1"/>
</dbReference>
<dbReference type="Pfam" id="PF23569">
    <property type="entry name" value="NBD_SMAX1"/>
    <property type="match status" value="1"/>
</dbReference>
<dbReference type="SUPFAM" id="SSF52540">
    <property type="entry name" value="P-loop containing nucleoside triphosphate hydrolases"/>
    <property type="match status" value="1"/>
</dbReference>
<feature type="chain" id="PRO_0000461711" description="Protein SUPPRESSOR OF MAX2 1A">
    <location>
        <begin position="1" status="less than"/>
        <end position="708"/>
    </location>
</feature>
<feature type="region of interest" description="Disordered" evidence="2">
    <location>
        <begin position="248"/>
        <end position="283"/>
    </location>
</feature>
<feature type="short sequence motif" description="EAR" evidence="1">
    <location>
        <begin position="537"/>
        <end position="541"/>
    </location>
</feature>
<feature type="non-terminal residue">
    <location>
        <position position="1"/>
    </location>
</feature>
<proteinExistence type="evidence at transcript level"/>
<sequence>MISEIGKAAVAEMGILLARFREDHNKLWLIGTATCETYLRCQVYHSTMENDWDLQAVPIASRSPHPGIFPRLGNERILGSSMEPLNPLKSFTGSVPVLSSRGPGNLNPRLRKSCCPQCTEKFEQELAKLVSEFANQSSEDKSESPRPQLPQWLQNAKLNNDSKVTALSQSKDQALLQQKTQELQKKWNDTCLQLHPNFQQNIGPERTVSPALCMPGLYNPNLLLRQPLQPKLQPSKNLGVSLQLNTTQMASKPQEKAASPPGSPVRTDLVLGPKQTETTPEKTLEDQAKDFLSRISSVPQNKFLDKFASALDADTFKRLLKGLMEKAWWQQDAASSVASAVSRCRLGNGRQRGGAPKGDIWLLFSGPDRFAKRKMASVLAEQFCGNSPIMICLGSRRDDEESDLGFRGKTALDRIAEAVRRNPVSVIMLEDIDEANVLIRGSIKRAMDRGKLTDSHGREISLGNVIFILTGNWSTMSPESYRNEYLMEEKKLVSLASSNWQLRLSLGEKSAKRRASWLHDEDRPTRPRKELNLGLAFDLNEAADVEDYRTDGSHNSSDLTVDHEEEPGLENRRFAIASVPHDLVSSVDDTIPFKLIEFSFARREIKKTISKKFSMVVDDKVSIEVEDDIVDRILGGLWRGQTSLEQWVEKVLGPSFDQLQPRLSTLDENAVVRLQLELYTALKGQSNGECLPSKVTIVADGQVMSTTS</sequence>
<gene>
    <name evidence="4" type="primary">SMAX1A</name>
</gene>
<keyword id="KW-0378">Hydrolase</keyword>
<keyword id="KW-0677">Repeat</keyword>
<keyword id="KW-0804">Transcription</keyword>
<keyword id="KW-0805">Transcription regulation</keyword>
<protein>
    <recommendedName>
        <fullName evidence="4">Protein SUPPRESSOR OF MAX2 1A</fullName>
        <shortName evidence="4">PhSMAX1a</shortName>
    </recommendedName>
</protein>
<organism>
    <name type="scientific">Petunia hybrida</name>
    <name type="common">Petunia</name>
    <dbReference type="NCBI Taxonomy" id="4102"/>
    <lineage>
        <taxon>Eukaryota</taxon>
        <taxon>Viridiplantae</taxon>
        <taxon>Streptophyta</taxon>
        <taxon>Embryophyta</taxon>
        <taxon>Tracheophyta</taxon>
        <taxon>Spermatophyta</taxon>
        <taxon>Magnoliopsida</taxon>
        <taxon>eudicotyledons</taxon>
        <taxon>Gunneridae</taxon>
        <taxon>Pentapetalae</taxon>
        <taxon>asterids</taxon>
        <taxon>lamiids</taxon>
        <taxon>Solanales</taxon>
        <taxon>Solanaceae</taxon>
        <taxon>Petunioideae</taxon>
        <taxon>Petunia</taxon>
    </lineage>
</organism>
<reference key="1">
    <citation type="journal article" date="2024" name="Science">
        <title>Volatile communication in plants relies on a KAI2-mediated signaling pathway.</title>
        <authorList>
            <person name="Stirling S.A."/>
            <person name="Guercio A.M."/>
            <person name="Partrick R.M."/>
            <person name="Huang X.-Q."/>
            <person name="Bergman M.E."/>
            <person name="Dwivedi V."/>
            <person name="Kortbeek R.W.J."/>
            <person name="Liu Y.-K."/>
            <person name="Sun F."/>
            <person name="Tao W.A."/>
            <person name="Li Y."/>
            <person name="Boachon B."/>
            <person name="Shabek N."/>
            <person name="Dudareva N."/>
        </authorList>
    </citation>
    <scope>NUCLEOTIDE SEQUENCE [MRNA]</scope>
    <scope>FUNCTION</scope>
    <scope>GENE FAMILY</scope>
    <scope>NOMENCLATURE</scope>
    <source>
        <strain>cv. Mitchell</strain>
    </source>
</reference>
<name>SMX1A_PETHY</name>
<accession>P0DXI9</accession>